<evidence type="ECO:0000255" key="1">
    <source>
        <dbReference type="HAMAP-Rule" id="MF_01037"/>
    </source>
</evidence>
<keyword id="KW-0963">Cytoplasm</keyword>
<keyword id="KW-0274">FAD</keyword>
<keyword id="KW-0285">Flavoprotein</keyword>
<keyword id="KW-0489">Methyltransferase</keyword>
<keyword id="KW-0520">NAD</keyword>
<keyword id="KW-0521">NADP</keyword>
<keyword id="KW-0808">Transferase</keyword>
<keyword id="KW-0819">tRNA processing</keyword>
<organism>
    <name type="scientific">Staphylococcus haemolyticus (strain JCSC1435)</name>
    <dbReference type="NCBI Taxonomy" id="279808"/>
    <lineage>
        <taxon>Bacteria</taxon>
        <taxon>Bacillati</taxon>
        <taxon>Bacillota</taxon>
        <taxon>Bacilli</taxon>
        <taxon>Bacillales</taxon>
        <taxon>Staphylococcaceae</taxon>
        <taxon>Staphylococcus</taxon>
    </lineage>
</organism>
<dbReference type="EC" id="2.1.1.74" evidence="1"/>
<dbReference type="EMBL" id="AP006716">
    <property type="protein sequence ID" value="BAE04972.1"/>
    <property type="molecule type" value="Genomic_DNA"/>
</dbReference>
<dbReference type="RefSeq" id="WP_011275949.1">
    <property type="nucleotide sequence ID" value="NC_007168.1"/>
</dbReference>
<dbReference type="SMR" id="Q4L5V3"/>
<dbReference type="GeneID" id="93781041"/>
<dbReference type="KEGG" id="sha:SH1663"/>
<dbReference type="eggNOG" id="COG1206">
    <property type="taxonomic scope" value="Bacteria"/>
</dbReference>
<dbReference type="HOGENOM" id="CLU_033057_1_0_9"/>
<dbReference type="OrthoDB" id="9803114at2"/>
<dbReference type="Proteomes" id="UP000000543">
    <property type="component" value="Chromosome"/>
</dbReference>
<dbReference type="GO" id="GO:0005829">
    <property type="term" value="C:cytosol"/>
    <property type="evidence" value="ECO:0007669"/>
    <property type="project" value="TreeGrafter"/>
</dbReference>
<dbReference type="GO" id="GO:0050660">
    <property type="term" value="F:flavin adenine dinucleotide binding"/>
    <property type="evidence" value="ECO:0007669"/>
    <property type="project" value="UniProtKB-UniRule"/>
</dbReference>
<dbReference type="GO" id="GO:0047151">
    <property type="term" value="F:tRNA (uracil(54)-C5)-methyltransferase activity, 5,10-methylenetetrahydrofolate-dependent"/>
    <property type="evidence" value="ECO:0007669"/>
    <property type="project" value="UniProtKB-UniRule"/>
</dbReference>
<dbReference type="GO" id="GO:0030488">
    <property type="term" value="P:tRNA methylation"/>
    <property type="evidence" value="ECO:0007669"/>
    <property type="project" value="TreeGrafter"/>
</dbReference>
<dbReference type="GO" id="GO:0002098">
    <property type="term" value="P:tRNA wobble uridine modification"/>
    <property type="evidence" value="ECO:0007669"/>
    <property type="project" value="TreeGrafter"/>
</dbReference>
<dbReference type="FunFam" id="3.50.50.60:FF:000035">
    <property type="entry name" value="Methylenetetrahydrofolate--tRNA-(uracil-5-)-methyltransferase TrmFO"/>
    <property type="match status" value="1"/>
</dbReference>
<dbReference type="FunFam" id="3.50.50.60:FF:000040">
    <property type="entry name" value="Methylenetetrahydrofolate--tRNA-(uracil-5-)-methyltransferase TrmFO"/>
    <property type="match status" value="1"/>
</dbReference>
<dbReference type="Gene3D" id="3.50.50.60">
    <property type="entry name" value="FAD/NAD(P)-binding domain"/>
    <property type="match status" value="2"/>
</dbReference>
<dbReference type="HAMAP" id="MF_01037">
    <property type="entry name" value="TrmFO"/>
    <property type="match status" value="1"/>
</dbReference>
<dbReference type="InterPro" id="IPR036188">
    <property type="entry name" value="FAD/NAD-bd_sf"/>
</dbReference>
<dbReference type="InterPro" id="IPR002218">
    <property type="entry name" value="MnmG-rel"/>
</dbReference>
<dbReference type="InterPro" id="IPR020595">
    <property type="entry name" value="MnmG-rel_CS"/>
</dbReference>
<dbReference type="InterPro" id="IPR040131">
    <property type="entry name" value="MnmG_N"/>
</dbReference>
<dbReference type="InterPro" id="IPR004417">
    <property type="entry name" value="TrmFO"/>
</dbReference>
<dbReference type="NCBIfam" id="TIGR00137">
    <property type="entry name" value="gid_trmFO"/>
    <property type="match status" value="1"/>
</dbReference>
<dbReference type="NCBIfam" id="NF003739">
    <property type="entry name" value="PRK05335.1"/>
    <property type="match status" value="1"/>
</dbReference>
<dbReference type="PANTHER" id="PTHR11806">
    <property type="entry name" value="GLUCOSE INHIBITED DIVISION PROTEIN A"/>
    <property type="match status" value="1"/>
</dbReference>
<dbReference type="PANTHER" id="PTHR11806:SF2">
    <property type="entry name" value="METHYLENETETRAHYDROFOLATE--TRNA-(URACIL-5-)-METHYLTRANSFERASE TRMFO"/>
    <property type="match status" value="1"/>
</dbReference>
<dbReference type="Pfam" id="PF01134">
    <property type="entry name" value="GIDA"/>
    <property type="match status" value="1"/>
</dbReference>
<dbReference type="SUPFAM" id="SSF51905">
    <property type="entry name" value="FAD/NAD(P)-binding domain"/>
    <property type="match status" value="1"/>
</dbReference>
<dbReference type="PROSITE" id="PS01281">
    <property type="entry name" value="GIDA_2"/>
    <property type="match status" value="1"/>
</dbReference>
<proteinExistence type="inferred from homology"/>
<comment type="function">
    <text evidence="1">Catalyzes the folate-dependent formation of 5-methyl-uridine at position 54 (M-5-U54) in all tRNAs.</text>
</comment>
<comment type="catalytic activity">
    <reaction evidence="1">
        <text>uridine(54) in tRNA + (6R)-5,10-methylene-5,6,7,8-tetrahydrofolate + NADH + H(+) = 5-methyluridine(54) in tRNA + (6S)-5,6,7,8-tetrahydrofolate + NAD(+)</text>
        <dbReference type="Rhea" id="RHEA:16873"/>
        <dbReference type="Rhea" id="RHEA-COMP:10167"/>
        <dbReference type="Rhea" id="RHEA-COMP:10193"/>
        <dbReference type="ChEBI" id="CHEBI:15378"/>
        <dbReference type="ChEBI" id="CHEBI:15636"/>
        <dbReference type="ChEBI" id="CHEBI:57453"/>
        <dbReference type="ChEBI" id="CHEBI:57540"/>
        <dbReference type="ChEBI" id="CHEBI:57945"/>
        <dbReference type="ChEBI" id="CHEBI:65315"/>
        <dbReference type="ChEBI" id="CHEBI:74447"/>
        <dbReference type="EC" id="2.1.1.74"/>
    </reaction>
</comment>
<comment type="catalytic activity">
    <reaction evidence="1">
        <text>uridine(54) in tRNA + (6R)-5,10-methylene-5,6,7,8-tetrahydrofolate + NADPH + H(+) = 5-methyluridine(54) in tRNA + (6S)-5,6,7,8-tetrahydrofolate + NADP(+)</text>
        <dbReference type="Rhea" id="RHEA:62372"/>
        <dbReference type="Rhea" id="RHEA-COMP:10167"/>
        <dbReference type="Rhea" id="RHEA-COMP:10193"/>
        <dbReference type="ChEBI" id="CHEBI:15378"/>
        <dbReference type="ChEBI" id="CHEBI:15636"/>
        <dbReference type="ChEBI" id="CHEBI:57453"/>
        <dbReference type="ChEBI" id="CHEBI:57783"/>
        <dbReference type="ChEBI" id="CHEBI:58349"/>
        <dbReference type="ChEBI" id="CHEBI:65315"/>
        <dbReference type="ChEBI" id="CHEBI:74447"/>
        <dbReference type="EC" id="2.1.1.74"/>
    </reaction>
</comment>
<comment type="cofactor">
    <cofactor evidence="1">
        <name>FAD</name>
        <dbReference type="ChEBI" id="CHEBI:57692"/>
    </cofactor>
</comment>
<comment type="subcellular location">
    <subcellularLocation>
        <location evidence="1">Cytoplasm</location>
    </subcellularLocation>
</comment>
<comment type="similarity">
    <text evidence="1">Belongs to the MnmG family. TrmFO subfamily.</text>
</comment>
<protein>
    <recommendedName>
        <fullName evidence="1">Methylenetetrahydrofolate--tRNA-(uracil-5-)-methyltransferase TrmFO</fullName>
        <ecNumber evidence="1">2.1.1.74</ecNumber>
    </recommendedName>
    <alternativeName>
        <fullName evidence="1">Folate-dependent tRNA (uracil-5-)-methyltransferase</fullName>
    </alternativeName>
    <alternativeName>
        <fullName evidence="1">Folate-dependent tRNA(M-5-U54)-methyltransferase</fullName>
    </alternativeName>
</protein>
<sequence>MSQTVNIVGAGLAGSEAAYQLAQRGIKVNLIEMRPVKQTPAHHTDKFAELVCSNSLRGNALTNGVGVLKEEMRRLDSLIISAADKARVPAGGALAVDRHDFSGYITETLRNHPNVTVINEEINSIPEGYTIIATGPLTTENLAKEIVDITGKDQLYFYDAAAPIIEKESIDMDKVYLKSRYDKGEAAYLNCPMTEEEFNRFYDAVLEAEVAPTNEFEKEKYFEGCMPFEVMAERGRKTLLFGPMKPVGLEDPKTGKRPFAVVQLRQDDAAGTLYNIVGFQTHLKWGAQKEVIRLIPGLENVDIVRYGVMHRNTFINSPDVLNEKYELIKEDRIQFAGQMTGVEGYVESAASGLVAGINLAHKLLDKGEVIFPRETMIGSMAYYISHAKNEKNFQPMNANFGLLPSLEKRIKDKKERYEAQANRALEYLENYKKTL</sequence>
<accession>Q4L5V3</accession>
<feature type="chain" id="PRO_0000117267" description="Methylenetetrahydrofolate--tRNA-(uracil-5-)-methyltransferase TrmFO">
    <location>
        <begin position="1"/>
        <end position="435"/>
    </location>
</feature>
<feature type="binding site" evidence="1">
    <location>
        <begin position="9"/>
        <end position="14"/>
    </location>
    <ligand>
        <name>FAD</name>
        <dbReference type="ChEBI" id="CHEBI:57692"/>
    </ligand>
</feature>
<name>TRMFO_STAHJ</name>
<reference key="1">
    <citation type="journal article" date="2005" name="J. Bacteriol.">
        <title>Whole-genome sequencing of Staphylococcus haemolyticus uncovers the extreme plasticity of its genome and the evolution of human-colonizing staphylococcal species.</title>
        <authorList>
            <person name="Takeuchi F."/>
            <person name="Watanabe S."/>
            <person name="Baba T."/>
            <person name="Yuzawa H."/>
            <person name="Ito T."/>
            <person name="Morimoto Y."/>
            <person name="Kuroda M."/>
            <person name="Cui L."/>
            <person name="Takahashi M."/>
            <person name="Ankai A."/>
            <person name="Baba S."/>
            <person name="Fukui S."/>
            <person name="Lee J.C."/>
            <person name="Hiramatsu K."/>
        </authorList>
    </citation>
    <scope>NUCLEOTIDE SEQUENCE [LARGE SCALE GENOMIC DNA]</scope>
    <source>
        <strain>JCSC1435</strain>
    </source>
</reference>
<gene>
    <name evidence="1" type="primary">trmFO</name>
    <name type="synonym">gid</name>
    <name type="ordered locus">SH1663</name>
</gene>